<gene>
    <name evidence="1" type="primary">ispG</name>
    <name type="ordered locus">DP1163</name>
</gene>
<name>ISPG_DESPS</name>
<evidence type="ECO:0000255" key="1">
    <source>
        <dbReference type="HAMAP-Rule" id="MF_00159"/>
    </source>
</evidence>
<organism>
    <name type="scientific">Desulfotalea psychrophila (strain LSv54 / DSM 12343)</name>
    <dbReference type="NCBI Taxonomy" id="177439"/>
    <lineage>
        <taxon>Bacteria</taxon>
        <taxon>Pseudomonadati</taxon>
        <taxon>Thermodesulfobacteriota</taxon>
        <taxon>Desulfobulbia</taxon>
        <taxon>Desulfobulbales</taxon>
        <taxon>Desulfocapsaceae</taxon>
        <taxon>Desulfotalea</taxon>
    </lineage>
</organism>
<comment type="function">
    <text evidence="1">Converts 2C-methyl-D-erythritol 2,4-cyclodiphosphate (ME-2,4cPP) into 1-hydroxy-2-methyl-2-(E)-butenyl 4-diphosphate.</text>
</comment>
<comment type="catalytic activity">
    <reaction evidence="1">
        <text>(2E)-4-hydroxy-3-methylbut-2-enyl diphosphate + oxidized [flavodoxin] + H2O + 2 H(+) = 2-C-methyl-D-erythritol 2,4-cyclic diphosphate + reduced [flavodoxin]</text>
        <dbReference type="Rhea" id="RHEA:43604"/>
        <dbReference type="Rhea" id="RHEA-COMP:10622"/>
        <dbReference type="Rhea" id="RHEA-COMP:10623"/>
        <dbReference type="ChEBI" id="CHEBI:15377"/>
        <dbReference type="ChEBI" id="CHEBI:15378"/>
        <dbReference type="ChEBI" id="CHEBI:57618"/>
        <dbReference type="ChEBI" id="CHEBI:58210"/>
        <dbReference type="ChEBI" id="CHEBI:58483"/>
        <dbReference type="ChEBI" id="CHEBI:128753"/>
        <dbReference type="EC" id="1.17.7.3"/>
    </reaction>
</comment>
<comment type="cofactor">
    <cofactor evidence="1">
        <name>[4Fe-4S] cluster</name>
        <dbReference type="ChEBI" id="CHEBI:49883"/>
    </cofactor>
    <text evidence="1">Binds 1 [4Fe-4S] cluster.</text>
</comment>
<comment type="pathway">
    <text evidence="1">Isoprenoid biosynthesis; isopentenyl diphosphate biosynthesis via DXP pathway; isopentenyl diphosphate from 1-deoxy-D-xylulose 5-phosphate: step 5/6.</text>
</comment>
<comment type="similarity">
    <text evidence="1">Belongs to the IspG family.</text>
</comment>
<feature type="chain" id="PRO_0000190570" description="4-hydroxy-3-methylbut-2-en-1-yl diphosphate synthase (flavodoxin)">
    <location>
        <begin position="1"/>
        <end position="364"/>
    </location>
</feature>
<feature type="binding site" evidence="1">
    <location>
        <position position="268"/>
    </location>
    <ligand>
        <name>[4Fe-4S] cluster</name>
        <dbReference type="ChEBI" id="CHEBI:49883"/>
    </ligand>
</feature>
<feature type="binding site" evidence="1">
    <location>
        <position position="271"/>
    </location>
    <ligand>
        <name>[4Fe-4S] cluster</name>
        <dbReference type="ChEBI" id="CHEBI:49883"/>
    </ligand>
</feature>
<feature type="binding site" evidence="1">
    <location>
        <position position="303"/>
    </location>
    <ligand>
        <name>[4Fe-4S] cluster</name>
        <dbReference type="ChEBI" id="CHEBI:49883"/>
    </ligand>
</feature>
<feature type="binding site" evidence="1">
    <location>
        <position position="310"/>
    </location>
    <ligand>
        <name>[4Fe-4S] cluster</name>
        <dbReference type="ChEBI" id="CHEBI:49883"/>
    </ligand>
</feature>
<protein>
    <recommendedName>
        <fullName evidence="1">4-hydroxy-3-methylbut-2-en-1-yl diphosphate synthase (flavodoxin)</fullName>
        <ecNumber evidence="1">1.17.7.3</ecNumber>
    </recommendedName>
    <alternativeName>
        <fullName evidence="1">1-hydroxy-2-methyl-2-(E)-butenyl 4-diphosphate synthase</fullName>
    </alternativeName>
</protein>
<proteinExistence type="inferred from homology"/>
<keyword id="KW-0004">4Fe-4S</keyword>
<keyword id="KW-0408">Iron</keyword>
<keyword id="KW-0411">Iron-sulfur</keyword>
<keyword id="KW-0414">Isoprene biosynthesis</keyword>
<keyword id="KW-0479">Metal-binding</keyword>
<keyword id="KW-0560">Oxidoreductase</keyword>
<keyword id="KW-1185">Reference proteome</keyword>
<accession>Q6AP32</accession>
<dbReference type="EC" id="1.17.7.3" evidence="1"/>
<dbReference type="EMBL" id="CR522870">
    <property type="protein sequence ID" value="CAG35892.1"/>
    <property type="molecule type" value="Genomic_DNA"/>
</dbReference>
<dbReference type="RefSeq" id="WP_011188404.1">
    <property type="nucleotide sequence ID" value="NC_006138.1"/>
</dbReference>
<dbReference type="SMR" id="Q6AP32"/>
<dbReference type="STRING" id="177439.DP1163"/>
<dbReference type="KEGG" id="dps:DP1163"/>
<dbReference type="eggNOG" id="COG0821">
    <property type="taxonomic scope" value="Bacteria"/>
</dbReference>
<dbReference type="HOGENOM" id="CLU_042258_0_0_7"/>
<dbReference type="OrthoDB" id="9803214at2"/>
<dbReference type="UniPathway" id="UPA00056">
    <property type="reaction ID" value="UER00096"/>
</dbReference>
<dbReference type="Proteomes" id="UP000000602">
    <property type="component" value="Chromosome"/>
</dbReference>
<dbReference type="GO" id="GO:0051539">
    <property type="term" value="F:4 iron, 4 sulfur cluster binding"/>
    <property type="evidence" value="ECO:0007669"/>
    <property type="project" value="UniProtKB-UniRule"/>
</dbReference>
<dbReference type="GO" id="GO:0046429">
    <property type="term" value="F:4-hydroxy-3-methylbut-2-en-1-yl diphosphate synthase activity (ferredoxin)"/>
    <property type="evidence" value="ECO:0007669"/>
    <property type="project" value="UniProtKB-UniRule"/>
</dbReference>
<dbReference type="GO" id="GO:0141197">
    <property type="term" value="F:4-hydroxy-3-methylbut-2-enyl-diphosphate synthase activity (flavodoxin)"/>
    <property type="evidence" value="ECO:0007669"/>
    <property type="project" value="UniProtKB-EC"/>
</dbReference>
<dbReference type="GO" id="GO:0005506">
    <property type="term" value="F:iron ion binding"/>
    <property type="evidence" value="ECO:0007669"/>
    <property type="project" value="InterPro"/>
</dbReference>
<dbReference type="GO" id="GO:0019288">
    <property type="term" value="P:isopentenyl diphosphate biosynthetic process, methylerythritol 4-phosphate pathway"/>
    <property type="evidence" value="ECO:0007669"/>
    <property type="project" value="UniProtKB-UniRule"/>
</dbReference>
<dbReference type="GO" id="GO:0016114">
    <property type="term" value="P:terpenoid biosynthetic process"/>
    <property type="evidence" value="ECO:0007669"/>
    <property type="project" value="InterPro"/>
</dbReference>
<dbReference type="FunFam" id="3.20.20.20:FF:000001">
    <property type="entry name" value="4-hydroxy-3-methylbut-2-en-1-yl diphosphate synthase (flavodoxin)"/>
    <property type="match status" value="1"/>
</dbReference>
<dbReference type="Gene3D" id="3.20.20.20">
    <property type="entry name" value="Dihydropteroate synthase-like"/>
    <property type="match status" value="1"/>
</dbReference>
<dbReference type="Gene3D" id="3.30.413.10">
    <property type="entry name" value="Sulfite Reductase Hemoprotein, domain 1"/>
    <property type="match status" value="1"/>
</dbReference>
<dbReference type="HAMAP" id="MF_00159">
    <property type="entry name" value="IspG"/>
    <property type="match status" value="1"/>
</dbReference>
<dbReference type="InterPro" id="IPR011005">
    <property type="entry name" value="Dihydropteroate_synth-like_sf"/>
</dbReference>
<dbReference type="InterPro" id="IPR016425">
    <property type="entry name" value="IspG_bac"/>
</dbReference>
<dbReference type="InterPro" id="IPR004588">
    <property type="entry name" value="IspG_bac-typ"/>
</dbReference>
<dbReference type="InterPro" id="IPR045854">
    <property type="entry name" value="NO2/SO3_Rdtase_4Fe4S_sf"/>
</dbReference>
<dbReference type="NCBIfam" id="TIGR00612">
    <property type="entry name" value="ispG_gcpE"/>
    <property type="match status" value="1"/>
</dbReference>
<dbReference type="NCBIfam" id="NF001540">
    <property type="entry name" value="PRK00366.1"/>
    <property type="match status" value="1"/>
</dbReference>
<dbReference type="PANTHER" id="PTHR30454">
    <property type="entry name" value="4-HYDROXY-3-METHYLBUT-2-EN-1-YL DIPHOSPHATE SYNTHASE"/>
    <property type="match status" value="1"/>
</dbReference>
<dbReference type="PANTHER" id="PTHR30454:SF0">
    <property type="entry name" value="4-HYDROXY-3-METHYLBUT-2-EN-1-YL DIPHOSPHATE SYNTHASE (FERREDOXIN), CHLOROPLASTIC"/>
    <property type="match status" value="1"/>
</dbReference>
<dbReference type="Pfam" id="PF04551">
    <property type="entry name" value="GcpE"/>
    <property type="match status" value="1"/>
</dbReference>
<dbReference type="PIRSF" id="PIRSF004640">
    <property type="entry name" value="IspG"/>
    <property type="match status" value="1"/>
</dbReference>
<dbReference type="SUPFAM" id="SSF51717">
    <property type="entry name" value="Dihydropteroate synthetase-like"/>
    <property type="match status" value="1"/>
</dbReference>
<dbReference type="SUPFAM" id="SSF56014">
    <property type="entry name" value="Nitrite and sulphite reductase 4Fe-4S domain-like"/>
    <property type="match status" value="1"/>
</dbReference>
<reference key="1">
    <citation type="journal article" date="2004" name="Environ. Microbiol.">
        <title>The genome of Desulfotalea psychrophila, a sulfate-reducing bacterium from permanently cold Arctic sediments.</title>
        <authorList>
            <person name="Rabus R."/>
            <person name="Ruepp A."/>
            <person name="Frickey T."/>
            <person name="Rattei T."/>
            <person name="Fartmann B."/>
            <person name="Stark M."/>
            <person name="Bauer M."/>
            <person name="Zibat A."/>
            <person name="Lombardot T."/>
            <person name="Becker I."/>
            <person name="Amann J."/>
            <person name="Gellner K."/>
            <person name="Teeling H."/>
            <person name="Leuschner W.D."/>
            <person name="Gloeckner F.-O."/>
            <person name="Lupas A.N."/>
            <person name="Amann R."/>
            <person name="Klenk H.-P."/>
        </authorList>
    </citation>
    <scope>NUCLEOTIDE SEQUENCE [LARGE SCALE GENOMIC DNA]</scope>
    <source>
        <strain>DSM 12343 / LSv54</strain>
    </source>
</reference>
<sequence length="364" mass="39266">MISRRSTRQIQVGRVAVGGDSPVSVQSMTNTDTRDIEKTAEQLQRLQQAGCDIARVAVLDQDAARAISALVDMSSMPIIADIHFDYRLAIAAMENGAAAIRINPGNLGGEEKTAKVVAAAKMHGLPIRVGVNSGSIEKDLLKKYGYPTADNTQALIESALRNVRLLEKHGFEQIKISIKSSDVLTTVNGYQQLSKVTDYPLHLGVTEAGGLIAGTVKSSVALGILLNQGIGDTLRISLTRDPVEEVRVAFELLRCLGIRQRGPELISCPTCGRTRIDLFSLAEKVEQVVQAMEAPIKVAVMGCVVNGPGEAKEADIGIAGGEGLGIIFKKGVLYKKVAEEQLLEVFLAELRELEEEYQKKHNNV</sequence>